<sequence>MRHRHGYRKLGRTSSHRAALLKNLSISLIEHGKIETTVEKAKELRSYVEKLITVAGKNDSNAHKAVFAALQSKEATKKLVNEIAPKYVERAGGYTRIIRTRIRRGDATTMAFIELV</sequence>
<gene>
    <name evidence="1" type="primary">rplQ</name>
    <name type="ordered locus">Suden_0328</name>
</gene>
<name>RL17_SULDN</name>
<keyword id="KW-1185">Reference proteome</keyword>
<keyword id="KW-0687">Ribonucleoprotein</keyword>
<keyword id="KW-0689">Ribosomal protein</keyword>
<dbReference type="EMBL" id="CP000153">
    <property type="protein sequence ID" value="ABB43609.1"/>
    <property type="molecule type" value="Genomic_DNA"/>
</dbReference>
<dbReference type="RefSeq" id="WP_011371963.1">
    <property type="nucleotide sequence ID" value="NC_007575.1"/>
</dbReference>
<dbReference type="SMR" id="Q30TS2"/>
<dbReference type="STRING" id="326298.Suden_0328"/>
<dbReference type="KEGG" id="tdn:Suden_0328"/>
<dbReference type="eggNOG" id="COG0203">
    <property type="taxonomic scope" value="Bacteria"/>
</dbReference>
<dbReference type="HOGENOM" id="CLU_074407_2_0_7"/>
<dbReference type="OrthoDB" id="9809073at2"/>
<dbReference type="Proteomes" id="UP000002714">
    <property type="component" value="Chromosome"/>
</dbReference>
<dbReference type="GO" id="GO:0022625">
    <property type="term" value="C:cytosolic large ribosomal subunit"/>
    <property type="evidence" value="ECO:0007669"/>
    <property type="project" value="TreeGrafter"/>
</dbReference>
<dbReference type="GO" id="GO:0003735">
    <property type="term" value="F:structural constituent of ribosome"/>
    <property type="evidence" value="ECO:0007669"/>
    <property type="project" value="InterPro"/>
</dbReference>
<dbReference type="GO" id="GO:0006412">
    <property type="term" value="P:translation"/>
    <property type="evidence" value="ECO:0007669"/>
    <property type="project" value="UniProtKB-UniRule"/>
</dbReference>
<dbReference type="FunFam" id="3.90.1030.10:FF:000003">
    <property type="entry name" value="50S ribosomal protein L17"/>
    <property type="match status" value="1"/>
</dbReference>
<dbReference type="Gene3D" id="3.90.1030.10">
    <property type="entry name" value="Ribosomal protein L17"/>
    <property type="match status" value="1"/>
</dbReference>
<dbReference type="HAMAP" id="MF_01368">
    <property type="entry name" value="Ribosomal_bL17"/>
    <property type="match status" value="1"/>
</dbReference>
<dbReference type="InterPro" id="IPR000456">
    <property type="entry name" value="Ribosomal_bL17"/>
</dbReference>
<dbReference type="InterPro" id="IPR036373">
    <property type="entry name" value="Ribosomal_bL17_sf"/>
</dbReference>
<dbReference type="NCBIfam" id="TIGR00059">
    <property type="entry name" value="L17"/>
    <property type="match status" value="1"/>
</dbReference>
<dbReference type="PANTHER" id="PTHR14413:SF16">
    <property type="entry name" value="LARGE RIBOSOMAL SUBUNIT PROTEIN BL17M"/>
    <property type="match status" value="1"/>
</dbReference>
<dbReference type="PANTHER" id="PTHR14413">
    <property type="entry name" value="RIBOSOMAL PROTEIN L17"/>
    <property type="match status" value="1"/>
</dbReference>
<dbReference type="Pfam" id="PF01196">
    <property type="entry name" value="Ribosomal_L17"/>
    <property type="match status" value="1"/>
</dbReference>
<dbReference type="SUPFAM" id="SSF64263">
    <property type="entry name" value="Prokaryotic ribosomal protein L17"/>
    <property type="match status" value="1"/>
</dbReference>
<feature type="chain" id="PRO_1000055984" description="Large ribosomal subunit protein bL17">
    <location>
        <begin position="1"/>
        <end position="116"/>
    </location>
</feature>
<organism>
    <name type="scientific">Sulfurimonas denitrificans (strain ATCC 33889 / DSM 1251)</name>
    <name type="common">Thiomicrospira denitrificans (strain ATCC 33889 / DSM 1251)</name>
    <dbReference type="NCBI Taxonomy" id="326298"/>
    <lineage>
        <taxon>Bacteria</taxon>
        <taxon>Pseudomonadati</taxon>
        <taxon>Campylobacterota</taxon>
        <taxon>Epsilonproteobacteria</taxon>
        <taxon>Campylobacterales</taxon>
        <taxon>Sulfurimonadaceae</taxon>
        <taxon>Sulfurimonas</taxon>
    </lineage>
</organism>
<comment type="subunit">
    <text evidence="1">Part of the 50S ribosomal subunit. Contacts protein L32.</text>
</comment>
<comment type="similarity">
    <text evidence="1">Belongs to the bacterial ribosomal protein bL17 family.</text>
</comment>
<evidence type="ECO:0000255" key="1">
    <source>
        <dbReference type="HAMAP-Rule" id="MF_01368"/>
    </source>
</evidence>
<evidence type="ECO:0000305" key="2"/>
<accession>Q30TS2</accession>
<protein>
    <recommendedName>
        <fullName evidence="1">Large ribosomal subunit protein bL17</fullName>
    </recommendedName>
    <alternativeName>
        <fullName evidence="2">50S ribosomal protein L17</fullName>
    </alternativeName>
</protein>
<proteinExistence type="inferred from homology"/>
<reference key="1">
    <citation type="journal article" date="2008" name="Appl. Environ. Microbiol.">
        <title>Genome of the epsilonproteobacterial chemolithoautotroph Sulfurimonas denitrificans.</title>
        <authorList>
            <person name="Sievert S.M."/>
            <person name="Scott K.M."/>
            <person name="Klotz M.G."/>
            <person name="Chain P.S.G."/>
            <person name="Hauser L.J."/>
            <person name="Hemp J."/>
            <person name="Huegler M."/>
            <person name="Land M."/>
            <person name="Lapidus A."/>
            <person name="Larimer F.W."/>
            <person name="Lucas S."/>
            <person name="Malfatti S.A."/>
            <person name="Meyer F."/>
            <person name="Paulsen I.T."/>
            <person name="Ren Q."/>
            <person name="Simon J."/>
            <person name="Bailey K."/>
            <person name="Diaz E."/>
            <person name="Fitzpatrick K.A."/>
            <person name="Glover B."/>
            <person name="Gwatney N."/>
            <person name="Korajkic A."/>
            <person name="Long A."/>
            <person name="Mobberley J.M."/>
            <person name="Pantry S.N."/>
            <person name="Pazder G."/>
            <person name="Peterson S."/>
            <person name="Quintanilla J.D."/>
            <person name="Sprinkle R."/>
            <person name="Stephens J."/>
            <person name="Thomas P."/>
            <person name="Vaughn R."/>
            <person name="Weber M.J."/>
            <person name="Wooten L.L."/>
        </authorList>
    </citation>
    <scope>NUCLEOTIDE SEQUENCE [LARGE SCALE GENOMIC DNA]</scope>
    <source>
        <strain>ATCC 33889 / DSM 1251</strain>
    </source>
</reference>